<name>COXX_MYCSK</name>
<keyword id="KW-1003">Cell membrane</keyword>
<keyword id="KW-0350">Heme biosynthesis</keyword>
<keyword id="KW-0472">Membrane</keyword>
<keyword id="KW-0808">Transferase</keyword>
<keyword id="KW-0812">Transmembrane</keyword>
<keyword id="KW-1133">Transmembrane helix</keyword>
<accession>A1UFQ0</accession>
<comment type="function">
    <text evidence="1">Converts heme B (protoheme IX) to heme O by substitution of the vinyl group on carbon 2 of heme B porphyrin ring with a hydroxyethyl farnesyl side group.</text>
</comment>
<comment type="catalytic activity">
    <reaction evidence="1">
        <text>heme b + (2E,6E)-farnesyl diphosphate + H2O = Fe(II)-heme o + diphosphate</text>
        <dbReference type="Rhea" id="RHEA:28070"/>
        <dbReference type="ChEBI" id="CHEBI:15377"/>
        <dbReference type="ChEBI" id="CHEBI:33019"/>
        <dbReference type="ChEBI" id="CHEBI:60344"/>
        <dbReference type="ChEBI" id="CHEBI:60530"/>
        <dbReference type="ChEBI" id="CHEBI:175763"/>
        <dbReference type="EC" id="2.5.1.141"/>
    </reaction>
</comment>
<comment type="pathway">
    <text evidence="1">Porphyrin-containing compound metabolism; heme O biosynthesis; heme O from protoheme: step 1/1.</text>
</comment>
<comment type="subcellular location">
    <subcellularLocation>
        <location evidence="1">Cell membrane</location>
        <topology evidence="1">Multi-pass membrane protein</topology>
    </subcellularLocation>
</comment>
<comment type="miscellaneous">
    <text evidence="1">Carbon 2 of the heme B porphyrin ring is defined according to the Fischer nomenclature.</text>
</comment>
<comment type="similarity">
    <text evidence="1">Belongs to the UbiA prenyltransferase family. Protoheme IX farnesyltransferase subfamily.</text>
</comment>
<comment type="sequence caution" evidence="2">
    <conflict type="erroneous initiation">
        <sequence resource="EMBL-CDS" id="ABL91658"/>
    </conflict>
</comment>
<protein>
    <recommendedName>
        <fullName evidence="1">Protoheme IX farnesyltransferase</fullName>
        <ecNumber evidence="1">2.5.1.141</ecNumber>
    </recommendedName>
    <alternativeName>
        <fullName evidence="1">Heme B farnesyltransferase</fullName>
    </alternativeName>
    <alternativeName>
        <fullName evidence="1">Heme O synthase</fullName>
    </alternativeName>
</protein>
<feature type="chain" id="PRO_0000327088" description="Protoheme IX farnesyltransferase">
    <location>
        <begin position="1"/>
        <end position="310"/>
    </location>
</feature>
<feature type="transmembrane region" description="Helical" evidence="1">
    <location>
        <begin position="31"/>
        <end position="51"/>
    </location>
</feature>
<feature type="transmembrane region" description="Helical" evidence="1">
    <location>
        <begin position="53"/>
        <end position="73"/>
    </location>
</feature>
<feature type="transmembrane region" description="Helical" evidence="1">
    <location>
        <begin position="102"/>
        <end position="122"/>
    </location>
</feature>
<feature type="transmembrane region" description="Helical" evidence="1">
    <location>
        <begin position="124"/>
        <end position="144"/>
    </location>
</feature>
<feature type="transmembrane region" description="Helical" evidence="1">
    <location>
        <begin position="149"/>
        <end position="169"/>
    </location>
</feature>
<feature type="transmembrane region" description="Helical" evidence="1">
    <location>
        <begin position="170"/>
        <end position="190"/>
    </location>
</feature>
<feature type="transmembrane region" description="Helical" evidence="1">
    <location>
        <begin position="242"/>
        <end position="262"/>
    </location>
</feature>
<feature type="transmembrane region" description="Helical" evidence="1">
    <location>
        <begin position="289"/>
        <end position="309"/>
    </location>
</feature>
<dbReference type="EC" id="2.5.1.141" evidence="1"/>
<dbReference type="EMBL" id="CP000518">
    <property type="protein sequence ID" value="ABL91658.1"/>
    <property type="status" value="ALT_INIT"/>
    <property type="molecule type" value="Genomic_DNA"/>
</dbReference>
<dbReference type="SMR" id="A1UFQ0"/>
<dbReference type="STRING" id="189918.Mkms_2461"/>
<dbReference type="KEGG" id="mkm:Mkms_2461"/>
<dbReference type="HOGENOM" id="CLU_029631_0_1_11"/>
<dbReference type="OrthoDB" id="9814417at2"/>
<dbReference type="UniPathway" id="UPA00834">
    <property type="reaction ID" value="UER00712"/>
</dbReference>
<dbReference type="GO" id="GO:0005886">
    <property type="term" value="C:plasma membrane"/>
    <property type="evidence" value="ECO:0007669"/>
    <property type="project" value="UniProtKB-SubCell"/>
</dbReference>
<dbReference type="GO" id="GO:0008495">
    <property type="term" value="F:protoheme IX farnesyltransferase activity"/>
    <property type="evidence" value="ECO:0007669"/>
    <property type="project" value="UniProtKB-UniRule"/>
</dbReference>
<dbReference type="GO" id="GO:0048034">
    <property type="term" value="P:heme O biosynthetic process"/>
    <property type="evidence" value="ECO:0007669"/>
    <property type="project" value="UniProtKB-UniRule"/>
</dbReference>
<dbReference type="CDD" id="cd13957">
    <property type="entry name" value="PT_UbiA_Cox10"/>
    <property type="match status" value="1"/>
</dbReference>
<dbReference type="FunFam" id="1.10.357.140:FF:000001">
    <property type="entry name" value="Protoheme IX farnesyltransferase"/>
    <property type="match status" value="1"/>
</dbReference>
<dbReference type="Gene3D" id="1.10.357.140">
    <property type="entry name" value="UbiA prenyltransferase"/>
    <property type="match status" value="1"/>
</dbReference>
<dbReference type="HAMAP" id="MF_00154">
    <property type="entry name" value="CyoE_CtaB"/>
    <property type="match status" value="1"/>
</dbReference>
<dbReference type="InterPro" id="IPR006369">
    <property type="entry name" value="Protohaem_IX_farnesylTrfase"/>
</dbReference>
<dbReference type="InterPro" id="IPR000537">
    <property type="entry name" value="UbiA_prenyltransferase"/>
</dbReference>
<dbReference type="InterPro" id="IPR044878">
    <property type="entry name" value="UbiA_sf"/>
</dbReference>
<dbReference type="NCBIfam" id="TIGR01473">
    <property type="entry name" value="cyoE_ctaB"/>
    <property type="match status" value="1"/>
</dbReference>
<dbReference type="NCBIfam" id="NF003349">
    <property type="entry name" value="PRK04375.1-2"/>
    <property type="match status" value="1"/>
</dbReference>
<dbReference type="PANTHER" id="PTHR43448:SF7">
    <property type="entry name" value="4-HYDROXYBENZOATE SOLANESYLTRANSFERASE"/>
    <property type="match status" value="1"/>
</dbReference>
<dbReference type="PANTHER" id="PTHR43448">
    <property type="entry name" value="PROTOHEME IX FARNESYLTRANSFERASE, MITOCHONDRIAL"/>
    <property type="match status" value="1"/>
</dbReference>
<dbReference type="Pfam" id="PF01040">
    <property type="entry name" value="UbiA"/>
    <property type="match status" value="1"/>
</dbReference>
<gene>
    <name evidence="1" type="primary">ctaB</name>
    <name type="ordered locus">Mkms_2461</name>
</gene>
<evidence type="ECO:0000255" key="1">
    <source>
        <dbReference type="HAMAP-Rule" id="MF_00154"/>
    </source>
</evidence>
<evidence type="ECO:0000305" key="2"/>
<sequence>MSIRERHLSHGAPSRIRTTVLAYLALTKPRVIELLLVTAIPAMLLADRGSVDPLLILNTLIGGMLAAAGANTLNCVADADIDKKMKRTARRPLARDTVPTRNALIFGLVLSVGSFFWLWGTSNLLSGLLAVATIAFYVFVYTLLLKRRTSQNVVWGGAAGCMPVMIGWSAVTGTIQWPALVMFAIIFFWTPPHTWALAMRYKDDYKAAGVPMLPAVATERQVTRQILIYTWLTVLTTLALALATGWLYASVAVLAGTWFLVMAHQLYNGVKRGEPVKPLRLFLQSNNYLAVVFAALAVDSVLALPTLLGS</sequence>
<reference key="1">
    <citation type="submission" date="2006-12" db="EMBL/GenBank/DDBJ databases">
        <title>Complete sequence of chromosome of Mycobacterium sp. KMS.</title>
        <authorList>
            <consortium name="US DOE Joint Genome Institute"/>
            <person name="Copeland A."/>
            <person name="Lucas S."/>
            <person name="Lapidus A."/>
            <person name="Barry K."/>
            <person name="Detter J.C."/>
            <person name="Glavina del Rio T."/>
            <person name="Hammon N."/>
            <person name="Israni S."/>
            <person name="Dalin E."/>
            <person name="Tice H."/>
            <person name="Pitluck S."/>
            <person name="Kiss H."/>
            <person name="Brettin T."/>
            <person name="Bruce D."/>
            <person name="Han C."/>
            <person name="Tapia R."/>
            <person name="Gilna P."/>
            <person name="Schmutz J."/>
            <person name="Larimer F."/>
            <person name="Land M."/>
            <person name="Hauser L."/>
            <person name="Kyrpides N."/>
            <person name="Mikhailova N."/>
            <person name="Miller C.D."/>
            <person name="Richardson P."/>
        </authorList>
    </citation>
    <scope>NUCLEOTIDE SEQUENCE [LARGE SCALE GENOMIC DNA]</scope>
    <source>
        <strain>KMS</strain>
    </source>
</reference>
<proteinExistence type="inferred from homology"/>
<organism>
    <name type="scientific">Mycobacterium sp. (strain KMS)</name>
    <dbReference type="NCBI Taxonomy" id="189918"/>
    <lineage>
        <taxon>Bacteria</taxon>
        <taxon>Bacillati</taxon>
        <taxon>Actinomycetota</taxon>
        <taxon>Actinomycetes</taxon>
        <taxon>Mycobacteriales</taxon>
        <taxon>Mycobacteriaceae</taxon>
        <taxon>Mycobacterium</taxon>
    </lineage>
</organism>